<proteinExistence type="inferred from homology"/>
<keyword id="KW-0175">Coiled coil</keyword>
<keyword id="KW-0539">Nucleus</keyword>
<keyword id="KW-1185">Reference proteome</keyword>
<keyword id="KW-0690">Ribosome biogenesis</keyword>
<keyword id="KW-0698">rRNA processing</keyword>
<dbReference type="EMBL" id="CR382139">
    <property type="protein sequence ID" value="CAG90533.1"/>
    <property type="molecule type" value="Genomic_DNA"/>
</dbReference>
<dbReference type="RefSeq" id="XP_462046.1">
    <property type="nucleotide sequence ID" value="XM_462046.1"/>
</dbReference>
<dbReference type="SMR" id="Q6BIC4"/>
<dbReference type="FunCoup" id="Q6BIC4">
    <property type="interactions" value="166"/>
</dbReference>
<dbReference type="STRING" id="284592.Q6BIC4"/>
<dbReference type="GeneID" id="2904957"/>
<dbReference type="KEGG" id="dha:DEHA2G11858g"/>
<dbReference type="VEuPathDB" id="FungiDB:DEHA2G11858g"/>
<dbReference type="eggNOG" id="ENOG502S7VB">
    <property type="taxonomic scope" value="Eukaryota"/>
</dbReference>
<dbReference type="HOGENOM" id="CLU_125051_0_1_1"/>
<dbReference type="InParanoid" id="Q6BIC4"/>
<dbReference type="OMA" id="NGKQWHD"/>
<dbReference type="OrthoDB" id="3942380at2759"/>
<dbReference type="Proteomes" id="UP000000599">
    <property type="component" value="Chromosome G"/>
</dbReference>
<dbReference type="GO" id="GO:0005730">
    <property type="term" value="C:nucleolus"/>
    <property type="evidence" value="ECO:0007669"/>
    <property type="project" value="UniProtKB-SubCell"/>
</dbReference>
<dbReference type="GO" id="GO:0006364">
    <property type="term" value="P:rRNA processing"/>
    <property type="evidence" value="ECO:0007669"/>
    <property type="project" value="UniProtKB-KW"/>
</dbReference>
<dbReference type="InterPro" id="IPR005579">
    <property type="entry name" value="Cgr1-like"/>
</dbReference>
<dbReference type="Pfam" id="PF03879">
    <property type="entry name" value="Cgr1"/>
    <property type="match status" value="1"/>
</dbReference>
<accession>Q6BIC4</accession>
<reference key="1">
    <citation type="journal article" date="2004" name="Nature">
        <title>Genome evolution in yeasts.</title>
        <authorList>
            <person name="Dujon B."/>
            <person name="Sherman D."/>
            <person name="Fischer G."/>
            <person name="Durrens P."/>
            <person name="Casaregola S."/>
            <person name="Lafontaine I."/>
            <person name="de Montigny J."/>
            <person name="Marck C."/>
            <person name="Neuveglise C."/>
            <person name="Talla E."/>
            <person name="Goffard N."/>
            <person name="Frangeul L."/>
            <person name="Aigle M."/>
            <person name="Anthouard V."/>
            <person name="Babour A."/>
            <person name="Barbe V."/>
            <person name="Barnay S."/>
            <person name="Blanchin S."/>
            <person name="Beckerich J.-M."/>
            <person name="Beyne E."/>
            <person name="Bleykasten C."/>
            <person name="Boisrame A."/>
            <person name="Boyer J."/>
            <person name="Cattolico L."/>
            <person name="Confanioleri F."/>
            <person name="de Daruvar A."/>
            <person name="Despons L."/>
            <person name="Fabre E."/>
            <person name="Fairhead C."/>
            <person name="Ferry-Dumazet H."/>
            <person name="Groppi A."/>
            <person name="Hantraye F."/>
            <person name="Hennequin C."/>
            <person name="Jauniaux N."/>
            <person name="Joyet P."/>
            <person name="Kachouri R."/>
            <person name="Kerrest A."/>
            <person name="Koszul R."/>
            <person name="Lemaire M."/>
            <person name="Lesur I."/>
            <person name="Ma L."/>
            <person name="Muller H."/>
            <person name="Nicaud J.-M."/>
            <person name="Nikolski M."/>
            <person name="Oztas S."/>
            <person name="Ozier-Kalogeropoulos O."/>
            <person name="Pellenz S."/>
            <person name="Potier S."/>
            <person name="Richard G.-F."/>
            <person name="Straub M.-L."/>
            <person name="Suleau A."/>
            <person name="Swennen D."/>
            <person name="Tekaia F."/>
            <person name="Wesolowski-Louvel M."/>
            <person name="Westhof E."/>
            <person name="Wirth B."/>
            <person name="Zeniou-Meyer M."/>
            <person name="Zivanovic Y."/>
            <person name="Bolotin-Fukuhara M."/>
            <person name="Thierry A."/>
            <person name="Bouchier C."/>
            <person name="Caudron B."/>
            <person name="Scarpelli C."/>
            <person name="Gaillardin C."/>
            <person name="Weissenbach J."/>
            <person name="Wincker P."/>
            <person name="Souciet J.-L."/>
        </authorList>
    </citation>
    <scope>NUCLEOTIDE SEQUENCE [LARGE SCALE GENOMIC DNA]</scope>
    <source>
        <strain>ATCC 36239 / CBS 767 / BCRC 21394 / JCM 1990 / NBRC 0083 / IGC 2968</strain>
    </source>
</reference>
<sequence>MSASSQMEYKDIPKRYIDPSAPKDVGEGSRVNGKDWKIKKDAFRVKTLGVKKLSTWEHREQKKLEQQQYKTRLQDLKQEKEDAKNQRISDLKRRREIKAEKERYEKMALKMHAKKVDRMRKREKRNKMLKER</sequence>
<organism>
    <name type="scientific">Debaryomyces hansenii (strain ATCC 36239 / CBS 767 / BCRC 21394 / JCM 1990 / NBRC 0083 / IGC 2968)</name>
    <name type="common">Yeast</name>
    <name type="synonym">Torulaspora hansenii</name>
    <dbReference type="NCBI Taxonomy" id="284592"/>
    <lineage>
        <taxon>Eukaryota</taxon>
        <taxon>Fungi</taxon>
        <taxon>Dikarya</taxon>
        <taxon>Ascomycota</taxon>
        <taxon>Saccharomycotina</taxon>
        <taxon>Pichiomycetes</taxon>
        <taxon>Debaryomycetaceae</taxon>
        <taxon>Debaryomyces</taxon>
    </lineage>
</organism>
<name>CGR1_DEBHA</name>
<gene>
    <name type="primary">CGR1</name>
    <name type="ordered locus">DEHA2G11858g</name>
</gene>
<comment type="function">
    <text evidence="1">Involved in nucleolar integrity and required for processing of the pre-rRNA for the 60S ribosome subunit.</text>
</comment>
<comment type="subcellular location">
    <subcellularLocation>
        <location evidence="1">Nucleus</location>
        <location evidence="1">Nucleolus</location>
    </subcellularLocation>
</comment>
<comment type="similarity">
    <text evidence="4">Belongs to the CGR1 family.</text>
</comment>
<evidence type="ECO:0000250" key="1"/>
<evidence type="ECO:0000255" key="2"/>
<evidence type="ECO:0000256" key="3">
    <source>
        <dbReference type="SAM" id="MobiDB-lite"/>
    </source>
</evidence>
<evidence type="ECO:0000305" key="4"/>
<protein>
    <recommendedName>
        <fullName>rRNA-processing protein CGR1</fullName>
    </recommendedName>
</protein>
<feature type="chain" id="PRO_0000278954" description="rRNA-processing protein CGR1">
    <location>
        <begin position="1"/>
        <end position="132"/>
    </location>
</feature>
<feature type="region of interest" description="Disordered" evidence="3">
    <location>
        <begin position="1"/>
        <end position="32"/>
    </location>
</feature>
<feature type="region of interest" description="Disordered" evidence="3">
    <location>
        <begin position="75"/>
        <end position="94"/>
    </location>
</feature>
<feature type="region of interest" description="Disordered" evidence="3">
    <location>
        <begin position="113"/>
        <end position="132"/>
    </location>
</feature>
<feature type="coiled-coil region" evidence="2">
    <location>
        <begin position="57"/>
        <end position="115"/>
    </location>
</feature>
<feature type="compositionally biased region" description="Basic and acidic residues" evidence="3">
    <location>
        <begin position="8"/>
        <end position="17"/>
    </location>
</feature>
<feature type="compositionally biased region" description="Basic residues" evidence="3">
    <location>
        <begin position="113"/>
        <end position="125"/>
    </location>
</feature>